<gene>
    <name type="primary">Miox</name>
    <name type="synonym">Aldrl6</name>
    <name type="synonym">Ksp32</name>
    <name type="synonym">Rsor</name>
</gene>
<accession>Q9QXN4</accession>
<accession>Q5S8C8</accession>
<accession>Q68G06</accession>
<accession>Q99PN7</accession>
<evidence type="ECO:0000250" key="1"/>
<evidence type="ECO:0000305" key="2"/>
<evidence type="ECO:0007744" key="3">
    <source>
    </source>
</evidence>
<name>MIOX_RAT</name>
<protein>
    <recommendedName>
        <fullName>Inositol oxygenase</fullName>
        <ecNumber>1.13.99.1</ecNumber>
    </recommendedName>
    <alternativeName>
        <fullName>Aldehyde reductase-like 6</fullName>
    </alternativeName>
    <alternativeName>
        <fullName>Kidney-specific protein 32</fullName>
    </alternativeName>
    <alternativeName>
        <fullName>Myo-inositol oxygenase</fullName>
        <shortName>MI oxygenase</shortName>
    </alternativeName>
    <alternativeName>
        <fullName>Renal-specific oxidoreductase</fullName>
    </alternativeName>
</protein>
<sequence>MKVDLGPDPSLVYRPDVDPEMAKSKGSFRNYTSGPLLDRVFTTYKLMHTHQTVDFVMRKRIQFGSFSYKKMTVMEAVDMLDDLVDESDPDVDFPNSFHAFQTAEGIRKAHPDKDWFHLVGLLHDLGKILALWGEPQWAVVGDTFPVGCRPQASVVFCDSTFQDNPDLQDPRYSTELGMYQPHCGLENVLMSWGHDEYLYQMMKFNKFSLPSEAFYMVRFHSFYPWHTGGDYRQLCSQQDLDMLPWVQEFNKFDLYTKCPDLPEVKSLRPYYQGLIDKYCPGILSW</sequence>
<dbReference type="EC" id="1.13.99.1"/>
<dbReference type="EMBL" id="AF197128">
    <property type="protein sequence ID" value="AAF25203.1"/>
    <property type="molecule type" value="mRNA"/>
</dbReference>
<dbReference type="EMBL" id="AF230096">
    <property type="protein sequence ID" value="AAK00767.1"/>
    <property type="molecule type" value="mRNA"/>
</dbReference>
<dbReference type="EMBL" id="AY738259">
    <property type="protein sequence ID" value="AAV65817.1"/>
    <property type="molecule type" value="mRNA"/>
</dbReference>
<dbReference type="EMBL" id="BC078840">
    <property type="protein sequence ID" value="AAH78840.1"/>
    <property type="molecule type" value="mRNA"/>
</dbReference>
<dbReference type="RefSeq" id="NP_665714.2">
    <property type="nucleotide sequence ID" value="NM_145771.2"/>
</dbReference>
<dbReference type="SMR" id="Q9QXN4"/>
<dbReference type="FunCoup" id="Q9QXN4">
    <property type="interactions" value="50"/>
</dbReference>
<dbReference type="STRING" id="10116.ENSRNOP00000011941"/>
<dbReference type="iPTMnet" id="Q9QXN4"/>
<dbReference type="PhosphoSitePlus" id="Q9QXN4"/>
<dbReference type="PaxDb" id="10116-ENSRNOP00000011941"/>
<dbReference type="DNASU" id="252899"/>
<dbReference type="Ensembl" id="ENSRNOT00000011941.6">
    <property type="protein sequence ID" value="ENSRNOP00000011941.5"/>
    <property type="gene ID" value="ENSRNOG00000008694.6"/>
</dbReference>
<dbReference type="GeneID" id="252899"/>
<dbReference type="KEGG" id="rno:252899"/>
<dbReference type="AGR" id="RGD:628739"/>
<dbReference type="CTD" id="55586"/>
<dbReference type="RGD" id="628739">
    <property type="gene designation" value="Miox"/>
</dbReference>
<dbReference type="eggNOG" id="KOG1573">
    <property type="taxonomic scope" value="Eukaryota"/>
</dbReference>
<dbReference type="GeneTree" id="ENSGT00390000016211"/>
<dbReference type="HOGENOM" id="CLU_050259_1_0_1"/>
<dbReference type="InParanoid" id="Q9QXN4"/>
<dbReference type="OrthoDB" id="2295at9989"/>
<dbReference type="PhylomeDB" id="Q9QXN4"/>
<dbReference type="TreeFam" id="TF300089"/>
<dbReference type="BRENDA" id="1.13.99.1">
    <property type="organism ID" value="5301"/>
</dbReference>
<dbReference type="Reactome" id="R-RNO-1855183">
    <property type="pathway name" value="Synthesis of IP2, IP, and Ins in the cytosol"/>
</dbReference>
<dbReference type="SABIO-RK" id="Q9QXN4"/>
<dbReference type="UniPathway" id="UPA00111">
    <property type="reaction ID" value="UER00527"/>
</dbReference>
<dbReference type="PRO" id="PR:Q9QXN4"/>
<dbReference type="Proteomes" id="UP000002494">
    <property type="component" value="Chromosome 7"/>
</dbReference>
<dbReference type="GO" id="GO:0005737">
    <property type="term" value="C:cytoplasm"/>
    <property type="evidence" value="ECO:0000250"/>
    <property type="project" value="UniProtKB"/>
</dbReference>
<dbReference type="GO" id="GO:0016234">
    <property type="term" value="C:inclusion body"/>
    <property type="evidence" value="ECO:0000250"/>
    <property type="project" value="UniProtKB"/>
</dbReference>
<dbReference type="GO" id="GO:0004033">
    <property type="term" value="F:aldo-keto reductase (NADPH) activity"/>
    <property type="evidence" value="ECO:0000250"/>
    <property type="project" value="UniProtKB"/>
</dbReference>
<dbReference type="GO" id="GO:0008199">
    <property type="term" value="F:ferric iron binding"/>
    <property type="evidence" value="ECO:0000250"/>
    <property type="project" value="UniProtKB"/>
</dbReference>
<dbReference type="GO" id="GO:0050113">
    <property type="term" value="F:inositol oxygenase activity"/>
    <property type="evidence" value="ECO:0000250"/>
    <property type="project" value="UniProtKB"/>
</dbReference>
<dbReference type="GO" id="GO:0050661">
    <property type="term" value="F:NADP binding"/>
    <property type="evidence" value="ECO:0000314"/>
    <property type="project" value="RGD"/>
</dbReference>
<dbReference type="GO" id="GO:0016651">
    <property type="term" value="F:oxidoreductase activity, acting on NAD(P)H"/>
    <property type="evidence" value="ECO:0000266"/>
    <property type="project" value="RGD"/>
</dbReference>
<dbReference type="GO" id="GO:0019310">
    <property type="term" value="P:inositol catabolic process"/>
    <property type="evidence" value="ECO:0000250"/>
    <property type="project" value="UniProtKB"/>
</dbReference>
<dbReference type="InterPro" id="IPR018170">
    <property type="entry name" value="Aldo/ket_reductase_CS"/>
</dbReference>
<dbReference type="InterPro" id="IPR007828">
    <property type="entry name" value="Inositol_oxygenase"/>
</dbReference>
<dbReference type="PANTHER" id="PTHR12588:SF0">
    <property type="entry name" value="INOSITOL OXYGENASE"/>
    <property type="match status" value="1"/>
</dbReference>
<dbReference type="PANTHER" id="PTHR12588">
    <property type="entry name" value="MYOINOSITOL OXYGENASE"/>
    <property type="match status" value="1"/>
</dbReference>
<dbReference type="Pfam" id="PF05153">
    <property type="entry name" value="MIOX"/>
    <property type="match status" value="1"/>
</dbReference>
<dbReference type="SUPFAM" id="SSF109604">
    <property type="entry name" value="HD-domain/PDEase-like"/>
    <property type="match status" value="1"/>
</dbReference>
<dbReference type="PROSITE" id="PS00063">
    <property type="entry name" value="ALDOKETO_REDUCTASE_3"/>
    <property type="match status" value="1"/>
</dbReference>
<proteinExistence type="evidence at protein level"/>
<reference key="1">
    <citation type="journal article" date="2000" name="Proc. Natl. Acad. Sci. U.S.A.">
        <title>Identification of a renal-specific oxido-reductase in newborn diabetic mice.</title>
        <authorList>
            <person name="Yang Q."/>
            <person name="Dixit B."/>
            <person name="Wada J."/>
            <person name="Tian Y."/>
            <person name="Wallner E.I."/>
            <person name="Srivastva S.K."/>
            <person name="Kanwar Y.S."/>
        </authorList>
    </citation>
    <scope>NUCLEOTIDE SEQUENCE [MRNA]</scope>
    <source>
        <tissue>Kidney</tissue>
    </source>
</reference>
<reference key="2">
    <citation type="submission" date="2000-02" db="EMBL/GenBank/DDBJ databases">
        <title>Identification of a novel kidney specific gene, KSP32, that is down regulated in acute ischemic renal failure.</title>
        <authorList>
            <person name="Hu E."/>
            <person name="Chen Z."/>
            <person name="Fredrickson T."/>
            <person name="Gellai M."/>
            <person name="Jugus M."/>
            <person name="Contino L."/>
            <person name="Spurr N."/>
            <person name="Sims M."/>
            <person name="Halsey W."/>
            <person name="Van Horn S."/>
            <person name="Mao J."/>
            <person name="Sathe G."/>
            <person name="Brooks D."/>
        </authorList>
    </citation>
    <scope>NUCLEOTIDE SEQUENCE [MRNA]</scope>
</reference>
<reference key="3">
    <citation type="journal article" date="2004" name="Biochem. Biophys. Res. Commun.">
        <title>Molecular cloning, expression, and characterization of myo-inositol oxygenase from mouse, rat, and human kidney.</title>
        <authorList>
            <person name="Arner R.J."/>
            <person name="Prabhu K.S."/>
            <person name="Reddy C.C."/>
        </authorList>
    </citation>
    <scope>NUCLEOTIDE SEQUENCE [MRNA]</scope>
    <source>
        <strain>Long Evans</strain>
        <tissue>Kidney</tissue>
    </source>
</reference>
<reference key="4">
    <citation type="journal article" date="2004" name="Genome Res.">
        <title>The status, quality, and expansion of the NIH full-length cDNA project: the Mammalian Gene Collection (MGC).</title>
        <authorList>
            <consortium name="The MGC Project Team"/>
        </authorList>
    </citation>
    <scope>NUCLEOTIDE SEQUENCE [LARGE SCALE MRNA]</scope>
    <source>
        <tissue>Kidney</tissue>
    </source>
</reference>
<reference key="5">
    <citation type="journal article" date="2012" name="Nat. Commun.">
        <title>Quantitative maps of protein phosphorylation sites across 14 different rat organs and tissues.</title>
        <authorList>
            <person name="Lundby A."/>
            <person name="Secher A."/>
            <person name="Lage K."/>
            <person name="Nordsborg N.B."/>
            <person name="Dmytriyev A."/>
            <person name="Lundby C."/>
            <person name="Olsen J.V."/>
        </authorList>
    </citation>
    <scope>PHOSPHORYLATION [LARGE SCALE ANALYSIS] AT SER-33</scope>
    <scope>IDENTIFICATION BY MASS SPECTROMETRY [LARGE SCALE ANALYSIS]</scope>
</reference>
<organism>
    <name type="scientific">Rattus norvegicus</name>
    <name type="common">Rat</name>
    <dbReference type="NCBI Taxonomy" id="10116"/>
    <lineage>
        <taxon>Eukaryota</taxon>
        <taxon>Metazoa</taxon>
        <taxon>Chordata</taxon>
        <taxon>Craniata</taxon>
        <taxon>Vertebrata</taxon>
        <taxon>Euteleostomi</taxon>
        <taxon>Mammalia</taxon>
        <taxon>Eutheria</taxon>
        <taxon>Euarchontoglires</taxon>
        <taxon>Glires</taxon>
        <taxon>Rodentia</taxon>
        <taxon>Myomorpha</taxon>
        <taxon>Muroidea</taxon>
        <taxon>Muridae</taxon>
        <taxon>Murinae</taxon>
        <taxon>Rattus</taxon>
    </lineage>
</organism>
<keyword id="KW-0963">Cytoplasm</keyword>
<keyword id="KW-0408">Iron</keyword>
<keyword id="KW-0479">Metal-binding</keyword>
<keyword id="KW-0560">Oxidoreductase</keyword>
<keyword id="KW-0597">Phosphoprotein</keyword>
<keyword id="KW-1185">Reference proteome</keyword>
<feature type="chain" id="PRO_0000079152" description="Inositol oxygenase">
    <location>
        <begin position="1"/>
        <end position="285"/>
    </location>
</feature>
<feature type="binding site" evidence="1">
    <location>
        <position position="29"/>
    </location>
    <ligand>
        <name>substrate</name>
    </ligand>
</feature>
<feature type="binding site" evidence="1">
    <location>
        <begin position="85"/>
        <end position="87"/>
    </location>
    <ligand>
        <name>substrate</name>
    </ligand>
</feature>
<feature type="binding site" evidence="1">
    <location>
        <position position="98"/>
    </location>
    <ligand>
        <name>Fe cation</name>
        <dbReference type="ChEBI" id="CHEBI:24875"/>
        <label>1</label>
    </ligand>
</feature>
<feature type="binding site" evidence="1">
    <location>
        <position position="123"/>
    </location>
    <ligand>
        <name>Fe cation</name>
        <dbReference type="ChEBI" id="CHEBI:24875"/>
        <label>1</label>
    </ligand>
</feature>
<feature type="binding site" evidence="1">
    <location>
        <position position="124"/>
    </location>
    <ligand>
        <name>Fe cation</name>
        <dbReference type="ChEBI" id="CHEBI:24875"/>
        <label>1</label>
    </ligand>
</feature>
<feature type="binding site" evidence="1">
    <location>
        <position position="124"/>
    </location>
    <ligand>
        <name>Fe cation</name>
        <dbReference type="ChEBI" id="CHEBI:24875"/>
        <label>2</label>
    </ligand>
</feature>
<feature type="binding site" evidence="1">
    <location>
        <position position="127"/>
    </location>
    <ligand>
        <name>substrate</name>
    </ligand>
</feature>
<feature type="binding site" evidence="1">
    <location>
        <begin position="141"/>
        <end position="142"/>
    </location>
    <ligand>
        <name>substrate</name>
    </ligand>
</feature>
<feature type="binding site" evidence="1">
    <location>
        <position position="194"/>
    </location>
    <ligand>
        <name>Fe cation</name>
        <dbReference type="ChEBI" id="CHEBI:24875"/>
        <label>2</label>
    </ligand>
</feature>
<feature type="binding site" evidence="1">
    <location>
        <begin position="220"/>
        <end position="221"/>
    </location>
    <ligand>
        <name>substrate</name>
    </ligand>
</feature>
<feature type="binding site" evidence="1">
    <location>
        <position position="220"/>
    </location>
    <ligand>
        <name>Fe cation</name>
        <dbReference type="ChEBI" id="CHEBI:24875"/>
        <label>2</label>
    </ligand>
</feature>
<feature type="binding site" evidence="1">
    <location>
        <position position="253"/>
    </location>
    <ligand>
        <name>Fe cation</name>
        <dbReference type="ChEBI" id="CHEBI:24875"/>
        <label>1</label>
    </ligand>
</feature>
<feature type="modified residue" description="Phosphoserine" evidence="3">
    <location>
        <position position="33"/>
    </location>
</feature>
<feature type="sequence conflict" description="In Ref. 2; AAK00767." evidence="2" ref="2">
    <original>DL</original>
    <variation>TV</variation>
    <location>
        <begin position="4"/>
        <end position="5"/>
    </location>
</feature>
<feature type="sequence conflict" description="In Ref. 2; AAK00767." evidence="2" ref="2">
    <original>M</original>
    <variation>V</variation>
    <location>
        <position position="21"/>
    </location>
</feature>
<feature type="sequence conflict" description="In Ref. 2; AAK00767." evidence="2" ref="2">
    <original>SKG</original>
    <variation>DKA</variation>
    <location>
        <begin position="24"/>
        <end position="26"/>
    </location>
</feature>
<feature type="sequence conflict" description="In Ref. 2." evidence="2" ref="2">
    <original>M</original>
    <variation>R</variation>
    <location>
        <position position="57"/>
    </location>
</feature>
<feature type="sequence conflict" description="In Ref. 3; AAV65817." evidence="2" ref="3">
    <original>M</original>
    <variation>V</variation>
    <location>
        <position position="57"/>
    </location>
</feature>
<feature type="sequence conflict" description="In Ref. 2." evidence="2" ref="2">
    <original>RKRI</original>
    <variation>SKHA</variation>
    <location>
        <begin position="58"/>
        <end position="61"/>
    </location>
</feature>
<feature type="sequence conflict" description="In Ref. 1 and 3." evidence="2" ref="1 3">
    <original>I</original>
    <variation>T</variation>
    <location>
        <position position="282"/>
    </location>
</feature>
<comment type="catalytic activity">
    <reaction>
        <text>myo-inositol + O2 = D-glucuronate + H2O + H(+)</text>
        <dbReference type="Rhea" id="RHEA:23696"/>
        <dbReference type="ChEBI" id="CHEBI:15377"/>
        <dbReference type="ChEBI" id="CHEBI:15378"/>
        <dbReference type="ChEBI" id="CHEBI:15379"/>
        <dbReference type="ChEBI" id="CHEBI:17268"/>
        <dbReference type="ChEBI" id="CHEBI:58720"/>
        <dbReference type="EC" id="1.13.99.1"/>
    </reaction>
</comment>
<comment type="cofactor">
    <cofactor evidence="1">
        <name>Fe cation</name>
        <dbReference type="ChEBI" id="CHEBI:24875"/>
    </cofactor>
    <text evidence="1">Binds 2 iron ions per subunit.</text>
</comment>
<comment type="pathway">
    <text>Polyol metabolism; myo-inositol degradation into D-glucuronate; D-glucuronate from myo-inositol: step 1/1.</text>
</comment>
<comment type="subcellular location">
    <subcellularLocation>
        <location evidence="1">Cytoplasm</location>
    </subcellularLocation>
</comment>
<comment type="tissue specificity">
    <text>Kidney specific.</text>
</comment>
<comment type="similarity">
    <text evidence="2">Belongs to the myo-inositol oxygenase family.</text>
</comment>